<sequence length="650" mass="71309">MQAERPLWVPDREIVERSPMAEFIDWCGERFGRSFADYDAFHDWSVSERGAFWTAVWEHCKVIGESGEKALVDGDRMLDARFFPEARLNFAENLLRKTGSGDALIFRGEDKVSYRLTWDELRALVSRLQQALRAQGIGAGDRVAAMMPNMPETIALMLATASVGAIWSSCSPDFGEQGVLDRFGQIAPKLFIVCDGYWYNGKRQDVDSKVRAVAKSLGAPTVIVPYAGDSAALAPTVEGGVTLADFIAGFQAGPLVFERLPFGHPLYILFSSGTTGVPKCIVHSAGGTLLQHLKEHRFHCGLRDGERLFYFTTCGWMMWNWLASGLAVGATLCLYDGSPFCPDGNVLFDYAAAERFAVFGTSAKYIDAVRKGGFTPARTHDLSSLRLMTSTGSPLSPEGFSFVYEGIKPDVQLASISGGTDIVSCFVLGNPLKPVWRGEIQGPGLGLAVDVWNDEGKPVRGEKGELVCTRAFPSMPVMFWNDPDGAKYRAAYFDRFDNVWCHGDFAEWTPHGGIVIHGRSDATLNPGGVRIGTAEIYNQVEQMDEVAEALCIGQDWEDDVRVVLFVRLARGVELTEALTREIKNRIRSGASPRHVPAKIIAVADIPRTKSGKIVELAVRDVVHGRPVKNKEALANPEALDLFAGLEELKS</sequence>
<evidence type="ECO:0000250" key="1">
    <source>
        <dbReference type="UniProtKB" id="Q8ZKF6"/>
    </source>
</evidence>
<evidence type="ECO:0000269" key="2">
    <source>
    </source>
</evidence>
<evidence type="ECO:0000303" key="3">
    <source>
    </source>
</evidence>
<evidence type="ECO:0000305" key="4"/>
<evidence type="ECO:0000305" key="5">
    <source>
    </source>
</evidence>
<evidence type="ECO:0000312" key="6">
    <source>
        <dbReference type="EMBL" id="CAC45291.1"/>
    </source>
</evidence>
<feature type="chain" id="PRO_0000208381" description="Acetoacetyl-coenzyme A synthetase">
    <location>
        <begin position="1"/>
        <end position="650"/>
    </location>
</feature>
<feature type="binding site" evidence="1">
    <location>
        <begin position="199"/>
        <end position="202"/>
    </location>
    <ligand>
        <name>CoA</name>
        <dbReference type="ChEBI" id="CHEBI:57287"/>
    </ligand>
</feature>
<feature type="binding site" evidence="1">
    <location>
        <begin position="392"/>
        <end position="394"/>
    </location>
    <ligand>
        <name>ATP</name>
        <dbReference type="ChEBI" id="CHEBI:30616"/>
    </ligand>
</feature>
<feature type="binding site" evidence="1">
    <location>
        <position position="504"/>
    </location>
    <ligand>
        <name>ATP</name>
        <dbReference type="ChEBI" id="CHEBI:30616"/>
    </ligand>
</feature>
<feature type="binding site" evidence="1">
    <location>
        <position position="519"/>
    </location>
    <ligand>
        <name>ATP</name>
        <dbReference type="ChEBI" id="CHEBI:30616"/>
    </ligand>
</feature>
<feature type="binding site" evidence="1">
    <location>
        <position position="530"/>
    </location>
    <ligand>
        <name>ATP</name>
        <dbReference type="ChEBI" id="CHEBI:30616"/>
    </ligand>
</feature>
<feature type="binding site" evidence="1">
    <location>
        <position position="546"/>
    </location>
    <ligand>
        <name>Mg(2+)</name>
        <dbReference type="ChEBI" id="CHEBI:18420"/>
    </ligand>
</feature>
<feature type="binding site" evidence="1">
    <location>
        <position position="587"/>
    </location>
    <ligand>
        <name>CoA</name>
        <dbReference type="ChEBI" id="CHEBI:57287"/>
    </ligand>
</feature>
<feature type="modified residue" description="N6-acetyllysine" evidence="1">
    <location>
        <position position="612"/>
    </location>
</feature>
<feature type="sequence conflict" description="In Ref. 1; AAC64548." evidence="4" ref="1">
    <original>A</original>
    <variation>S</variation>
    <location>
        <position position="144"/>
    </location>
</feature>
<feature type="sequence conflict" description="In Ref. 1; AAC64548." evidence="4" ref="1">
    <original>G</original>
    <variation>C</variation>
    <location>
        <position position="337"/>
    </location>
</feature>
<feature type="sequence conflict" description="In Ref. 1; AAC64548." evidence="4" ref="1">
    <original>V</original>
    <variation>L</variation>
    <location>
        <position position="358"/>
    </location>
</feature>
<feature type="sequence conflict" description="In Ref. 1; AAC64548." evidence="4" ref="1">
    <original>L</original>
    <variation>V</variation>
    <location>
        <position position="387"/>
    </location>
</feature>
<keyword id="KW-0007">Acetylation</keyword>
<keyword id="KW-0067">ATP-binding</keyword>
<keyword id="KW-0436">Ligase</keyword>
<keyword id="KW-0460">Magnesium</keyword>
<keyword id="KW-0479">Metal-binding</keyword>
<keyword id="KW-0547">Nucleotide-binding</keyword>
<keyword id="KW-1185">Reference proteome</keyword>
<reference key="1">
    <citation type="journal article" date="2000" name="J. Bacteriol.">
        <title>Requirement for the enzymes acetoacetyl coenzyme A synthetase and poly-3-hydroxybutyrate (PHB) synthase for growth of Sinorhizobium meliloti on PHB cycle intermediates.</title>
        <authorList>
            <person name="Cai G.-Q."/>
            <person name="Driscoll B.T."/>
            <person name="Charles T.C."/>
        </authorList>
    </citation>
    <scope>NUCLEOTIDE SEQUENCE [GENOMIC DNA]</scope>
    <scope>FUNCTION</scope>
    <scope>DISRUPTION PHENOTYPE</scope>
    <scope>PATHWAY</scope>
    <source>
        <strain>SU47 / 1021</strain>
    </source>
</reference>
<reference key="2">
    <citation type="journal article" date="2001" name="Proc. Natl. Acad. Sci. U.S.A.">
        <title>Analysis of the chromosome sequence of the legume symbiont Sinorhizobium meliloti strain 1021.</title>
        <authorList>
            <person name="Capela D."/>
            <person name="Barloy-Hubler F."/>
            <person name="Gouzy J."/>
            <person name="Bothe G."/>
            <person name="Ampe F."/>
            <person name="Batut J."/>
            <person name="Boistard P."/>
            <person name="Becker A."/>
            <person name="Boutry M."/>
            <person name="Cadieu E."/>
            <person name="Dreano S."/>
            <person name="Gloux S."/>
            <person name="Godrie T."/>
            <person name="Goffeau A."/>
            <person name="Kahn D."/>
            <person name="Kiss E."/>
            <person name="Lelaure V."/>
            <person name="Masuy D."/>
            <person name="Pohl T."/>
            <person name="Portetelle D."/>
            <person name="Puehler A."/>
            <person name="Purnelle B."/>
            <person name="Ramsperger U."/>
            <person name="Renard C."/>
            <person name="Thebault P."/>
            <person name="Vandenbol M."/>
            <person name="Weidner S."/>
            <person name="Galibert F."/>
        </authorList>
    </citation>
    <scope>NUCLEOTIDE SEQUENCE [LARGE SCALE GENOMIC DNA]</scope>
    <source>
        <strain>1021</strain>
    </source>
</reference>
<reference key="3">
    <citation type="journal article" date="2001" name="Science">
        <title>The composite genome of the legume symbiont Sinorhizobium meliloti.</title>
        <authorList>
            <person name="Galibert F."/>
            <person name="Finan T.M."/>
            <person name="Long S.R."/>
            <person name="Puehler A."/>
            <person name="Abola P."/>
            <person name="Ampe F."/>
            <person name="Barloy-Hubler F."/>
            <person name="Barnett M.J."/>
            <person name="Becker A."/>
            <person name="Boistard P."/>
            <person name="Bothe G."/>
            <person name="Boutry M."/>
            <person name="Bowser L."/>
            <person name="Buhrmester J."/>
            <person name="Cadieu E."/>
            <person name="Capela D."/>
            <person name="Chain P."/>
            <person name="Cowie A."/>
            <person name="Davis R.W."/>
            <person name="Dreano S."/>
            <person name="Federspiel N.A."/>
            <person name="Fisher R.F."/>
            <person name="Gloux S."/>
            <person name="Godrie T."/>
            <person name="Goffeau A."/>
            <person name="Golding B."/>
            <person name="Gouzy J."/>
            <person name="Gurjal M."/>
            <person name="Hernandez-Lucas I."/>
            <person name="Hong A."/>
            <person name="Huizar L."/>
            <person name="Hyman R.W."/>
            <person name="Jones T."/>
            <person name="Kahn D."/>
            <person name="Kahn M.L."/>
            <person name="Kalman S."/>
            <person name="Keating D.H."/>
            <person name="Kiss E."/>
            <person name="Komp C."/>
            <person name="Lelaure V."/>
            <person name="Masuy D."/>
            <person name="Palm C."/>
            <person name="Peck M.C."/>
            <person name="Pohl T.M."/>
            <person name="Portetelle D."/>
            <person name="Purnelle B."/>
            <person name="Ramsperger U."/>
            <person name="Surzycki R."/>
            <person name="Thebault P."/>
            <person name="Vandenbol M."/>
            <person name="Vorhoelter F.J."/>
            <person name="Weidner S."/>
            <person name="Wells D.H."/>
            <person name="Wong K."/>
            <person name="Yeh K.-C."/>
            <person name="Batut J."/>
        </authorList>
    </citation>
    <scope>NUCLEOTIDE SEQUENCE [LARGE SCALE GENOMIC DNA]</scope>
    <source>
        <strain>1021</strain>
    </source>
</reference>
<organism>
    <name type="scientific">Rhizobium meliloti (strain 1021)</name>
    <name type="common">Ensifer meliloti</name>
    <name type="synonym">Sinorhizobium meliloti</name>
    <dbReference type="NCBI Taxonomy" id="266834"/>
    <lineage>
        <taxon>Bacteria</taxon>
        <taxon>Pseudomonadati</taxon>
        <taxon>Pseudomonadota</taxon>
        <taxon>Alphaproteobacteria</taxon>
        <taxon>Hyphomicrobiales</taxon>
        <taxon>Rhizobiaceae</taxon>
        <taxon>Sinorhizobium/Ensifer group</taxon>
        <taxon>Sinorhizobium</taxon>
    </lineage>
</organism>
<accession>Q9Z3R3</accession>
<proteinExistence type="inferred from homology"/>
<comment type="function">
    <text evidence="2">Catalyzes the conversion of acetoacetate into acetoacetyl-CoA. Is involved in poly-3-hydroxybutyrate (PHB) degradation, which allows growth of R.meliloti on PHB cycle intermediates.</text>
</comment>
<comment type="catalytic activity">
    <reaction evidence="5">
        <text>acetoacetate + ATP + CoA = acetoacetyl-CoA + AMP + diphosphate</text>
        <dbReference type="Rhea" id="RHEA:16117"/>
        <dbReference type="ChEBI" id="CHEBI:13705"/>
        <dbReference type="ChEBI" id="CHEBI:30616"/>
        <dbReference type="ChEBI" id="CHEBI:33019"/>
        <dbReference type="ChEBI" id="CHEBI:57286"/>
        <dbReference type="ChEBI" id="CHEBI:57287"/>
        <dbReference type="ChEBI" id="CHEBI:456215"/>
        <dbReference type="EC" id="6.2.1.16"/>
    </reaction>
</comment>
<comment type="cofactor">
    <cofactor evidence="1">
        <name>Mg(2+)</name>
        <dbReference type="ChEBI" id="CHEBI:18420"/>
    </cofactor>
</comment>
<comment type="pathway">
    <text evidence="2">Biopolymer metabolism; poly-(R)-3-hydroxybutanoate degradation.</text>
</comment>
<comment type="PTM">
    <text evidence="1">Acetylated. Deacetylation by the SIR2-homolog deacetylase activates the enzyme.</text>
</comment>
<comment type="disruption phenotype">
    <text evidence="2">Acetyl-CoA synthetase activity is not affected in mutant cells, whereas acetoacetyl-CoA synthetase activity is drastically reduced. Moreover, after growth in YM medium, cells lacking this gene accumulate PHB to 60 to 70% of cell dry mass. They display reduced ability to proliferate during the first 30 days of incubation in growth medium lacking nutrient carbon.</text>
</comment>
<comment type="similarity">
    <text evidence="4">Belongs to the ATP-dependent AMP-binding enzyme family.</text>
</comment>
<name>AACS_RHIME</name>
<gene>
    <name evidence="6" type="primary">acsA2</name>
    <name evidence="3" type="synonym">acsA</name>
    <name type="ordered locus">R00719</name>
    <name type="ORF">SMc00774</name>
</gene>
<protein>
    <recommendedName>
        <fullName evidence="3">Acetoacetyl-coenzyme A synthetase</fullName>
        <shortName evidence="3">Acetoacetyl-CoA synthetase</shortName>
        <ecNumber evidence="5">6.2.1.16</ecNumber>
    </recommendedName>
</protein>
<dbReference type="EC" id="6.2.1.16" evidence="5"/>
<dbReference type="EMBL" id="AF080217">
    <property type="protein sequence ID" value="AAC64548.1"/>
    <property type="molecule type" value="Genomic_DNA"/>
</dbReference>
<dbReference type="EMBL" id="AL591688">
    <property type="protein sequence ID" value="CAC45291.1"/>
    <property type="molecule type" value="Genomic_DNA"/>
</dbReference>
<dbReference type="RefSeq" id="NP_384825.1">
    <property type="nucleotide sequence ID" value="NC_003047.1"/>
</dbReference>
<dbReference type="RefSeq" id="WP_010968769.1">
    <property type="nucleotide sequence ID" value="NC_003047.1"/>
</dbReference>
<dbReference type="SMR" id="Q9Z3R3"/>
<dbReference type="EnsemblBacteria" id="CAC45291">
    <property type="protein sequence ID" value="CAC45291"/>
    <property type="gene ID" value="SMc00774"/>
</dbReference>
<dbReference type="KEGG" id="sme:SMc00774"/>
<dbReference type="PATRIC" id="fig|266834.11.peg.2098"/>
<dbReference type="eggNOG" id="COG0365">
    <property type="taxonomic scope" value="Bacteria"/>
</dbReference>
<dbReference type="HOGENOM" id="CLU_000022_3_3_5"/>
<dbReference type="OrthoDB" id="9803968at2"/>
<dbReference type="BRENDA" id="6.2.1.16">
    <property type="organism ID" value="5347"/>
</dbReference>
<dbReference type="UniPathway" id="UPA01062"/>
<dbReference type="Proteomes" id="UP000001976">
    <property type="component" value="Chromosome"/>
</dbReference>
<dbReference type="GO" id="GO:0030729">
    <property type="term" value="F:acetoacetate-CoA ligase activity"/>
    <property type="evidence" value="ECO:0007669"/>
    <property type="project" value="UniProtKB-EC"/>
</dbReference>
<dbReference type="GO" id="GO:0005524">
    <property type="term" value="F:ATP binding"/>
    <property type="evidence" value="ECO:0007669"/>
    <property type="project" value="UniProtKB-KW"/>
</dbReference>
<dbReference type="GO" id="GO:0046872">
    <property type="term" value="F:metal ion binding"/>
    <property type="evidence" value="ECO:0007669"/>
    <property type="project" value="UniProtKB-KW"/>
</dbReference>
<dbReference type="GO" id="GO:0006629">
    <property type="term" value="P:lipid metabolic process"/>
    <property type="evidence" value="ECO:0007669"/>
    <property type="project" value="InterPro"/>
</dbReference>
<dbReference type="CDD" id="cd05943">
    <property type="entry name" value="AACS"/>
    <property type="match status" value="1"/>
</dbReference>
<dbReference type="Gene3D" id="3.30.300.30">
    <property type="match status" value="1"/>
</dbReference>
<dbReference type="Gene3D" id="3.40.50.12780">
    <property type="entry name" value="N-terminal domain of ligase-like"/>
    <property type="match status" value="1"/>
</dbReference>
<dbReference type="InterPro" id="IPR005914">
    <property type="entry name" value="Acac_CoA_synth"/>
</dbReference>
<dbReference type="InterPro" id="IPR025110">
    <property type="entry name" value="AMP-bd_C"/>
</dbReference>
<dbReference type="InterPro" id="IPR045851">
    <property type="entry name" value="AMP-bd_C_sf"/>
</dbReference>
<dbReference type="InterPro" id="IPR020845">
    <property type="entry name" value="AMP-binding_CS"/>
</dbReference>
<dbReference type="InterPro" id="IPR000873">
    <property type="entry name" value="AMP-dep_synth/lig_dom"/>
</dbReference>
<dbReference type="InterPro" id="IPR042099">
    <property type="entry name" value="ANL_N_sf"/>
</dbReference>
<dbReference type="NCBIfam" id="TIGR01217">
    <property type="entry name" value="ac_ac_CoA_syn"/>
    <property type="match status" value="1"/>
</dbReference>
<dbReference type="NCBIfam" id="NF002937">
    <property type="entry name" value="PRK03584.1"/>
    <property type="match status" value="1"/>
</dbReference>
<dbReference type="PANTHER" id="PTHR42921">
    <property type="entry name" value="ACETOACETYL-COA SYNTHETASE"/>
    <property type="match status" value="1"/>
</dbReference>
<dbReference type="PANTHER" id="PTHR42921:SF1">
    <property type="entry name" value="ACETOACETYL-COA SYNTHETASE"/>
    <property type="match status" value="1"/>
</dbReference>
<dbReference type="Pfam" id="PF00501">
    <property type="entry name" value="AMP-binding"/>
    <property type="match status" value="1"/>
</dbReference>
<dbReference type="Pfam" id="PF13193">
    <property type="entry name" value="AMP-binding_C"/>
    <property type="match status" value="1"/>
</dbReference>
<dbReference type="SUPFAM" id="SSF56801">
    <property type="entry name" value="Acetyl-CoA synthetase-like"/>
    <property type="match status" value="1"/>
</dbReference>
<dbReference type="PROSITE" id="PS00455">
    <property type="entry name" value="AMP_BINDING"/>
    <property type="match status" value="1"/>
</dbReference>